<feature type="chain" id="PRO_0000087852" description="Maleylacetate reductase 2">
    <location>
        <begin position="1"/>
        <end position="359"/>
    </location>
</feature>
<keyword id="KW-0058">Aromatic hydrocarbons catabolism</keyword>
<keyword id="KW-0903">Direct protein sequencing</keyword>
<keyword id="KW-0520">NAD</keyword>
<keyword id="KW-0560">Oxidoreductase</keyword>
<keyword id="KW-0614">Plasmid</keyword>
<gene>
    <name type="primary">tfdFII</name>
    <name type="ordered locus">Reut_D6471</name>
</gene>
<name>TFDF2_CUPPJ</name>
<reference key="1">
    <citation type="submission" date="1994-11" db="EMBL/GenBank/DDBJ databases">
        <authorList>
            <person name="van der Meer J.R."/>
        </authorList>
    </citation>
    <scope>NUCLEOTIDE SEQUENCE [GENOMIC DNA]</scope>
    <source>
        <plasmid>pJP4</plasmid>
    </source>
</reference>
<reference key="2">
    <citation type="journal article" date="2004" name="Environ. Microbiol.">
        <title>Genetic organization of the catabolic plasmid pJP4 from Ralstonia eutropha JMP134 (pJP4) reveals mechanisms of adaptation to chloroaromatic pollutants and evolution of specialized chloroaromatic degradation pathways.</title>
        <authorList>
            <person name="Trefault N."/>
            <person name="De la Iglesia R."/>
            <person name="Molina A.M."/>
            <person name="Manzano M."/>
            <person name="Ledger T."/>
            <person name="Perez-Pantoja D."/>
            <person name="Sanchez M.A."/>
            <person name="Stuardo M."/>
            <person name="Gonzalez B."/>
        </authorList>
    </citation>
    <scope>NUCLEOTIDE SEQUENCE [GENOMIC DNA]</scope>
    <source>
        <plasmid>pJP4</plasmid>
    </source>
</reference>
<reference key="3">
    <citation type="journal article" date="2010" name="PLoS ONE">
        <title>The complete multipartite genome sequence of Cupriavidus necator JMP134, a versatile pollutant degrader.</title>
        <authorList>
            <person name="Lykidis A."/>
            <person name="Perez-Pantoja D."/>
            <person name="Ledger T."/>
            <person name="Mavromatis K."/>
            <person name="Anderson I.J."/>
            <person name="Ivanova N.N."/>
            <person name="Hooper S.D."/>
            <person name="Lapidus A."/>
            <person name="Lucas S."/>
            <person name="Gonzalez B."/>
            <person name="Kyrpides N.C."/>
        </authorList>
    </citation>
    <scope>NUCLEOTIDE SEQUENCE [LARGE SCALE GENOMIC DNA]</scope>
    <source>
        <strain>JMP134 / LMG 1197</strain>
        <plasmid>pPJ4</plasmid>
    </source>
</reference>
<reference key="4">
    <citation type="journal article" date="1993" name="J. Bacteriol.">
        <title>Purification and characterization of maleylacetate reductase from Alcaligenes eutrophus JMP134(pJP4).</title>
        <authorList>
            <person name="Seibert V."/>
            <person name="Stadler-Fritzsche K."/>
            <person name="Schlomann M."/>
        </authorList>
    </citation>
    <scope>PROTEIN SEQUENCE OF 1-32</scope>
    <scope>CHARACTERIZATION</scope>
    <source>
        <plasmid>pJP4</plasmid>
    </source>
</reference>
<accession>P94135</accession>
<accession>Q46M61</accession>
<proteinExistence type="evidence at protein level"/>
<evidence type="ECO:0000305" key="1"/>
<sequence length="359" mass="37504">MTGDLNEFVAHFWPVRVVFGAGSTERIPAEVKRLGARRALVLCTPDQRDLAQRVLGDLGDLGAGFHDGAVMHVPEASVTRAAQAARDADADLLVAVGGGSTIGLAKALALHHGMRFVALPTTYAGSEMTPIWGLTADGAKRTGRDPRVLPSTVLYDPHHLTSLPPEVTGPSGMNAIAHAVESMYAPDRNPITMLLAEESIRAMAQGLPVAVDSPGDLDARTRTLYAAWLAGTVLGMVSMGLHHKLCHVLGGRFNLPHAPMHAVLLPHVAAFNEVAAPAELGRVAAALGAPGPGGAGAALHALLRFTCTERSLAAIGMPAQGIYDAAEHALADAYANPRQASREDIARLLRAAFTGEMPA</sequence>
<geneLocation type="plasmid">
    <name>pJP4</name>
</geneLocation>
<geneLocation type="plasmid">
    <name>pPJ4</name>
</geneLocation>
<comment type="function">
    <text>Plays a major role in the degradation of chloroaromatic compounds by channeling maleylacetate and some of its substituted derivatives into the 3-oxoadipate pathway. This enzyme converts maleylacetate and 2-chloromaleylacetate with similar efficiencies. NADH is preferred to NADPH as the cosubstrate.</text>
</comment>
<comment type="catalytic activity">
    <reaction>
        <text>3-oxoadipate + NAD(+) = maleylacetate + NADH + H(+)</text>
        <dbReference type="Rhea" id="RHEA:16981"/>
        <dbReference type="ChEBI" id="CHEBI:15378"/>
        <dbReference type="ChEBI" id="CHEBI:15775"/>
        <dbReference type="ChEBI" id="CHEBI:16468"/>
        <dbReference type="ChEBI" id="CHEBI:57540"/>
        <dbReference type="ChEBI" id="CHEBI:57945"/>
        <dbReference type="EC" id="1.3.1.32"/>
    </reaction>
</comment>
<comment type="catalytic activity">
    <reaction>
        <text>3-oxoadipate + NADP(+) = maleylacetate + NADPH + H(+)</text>
        <dbReference type="Rhea" id="RHEA:16985"/>
        <dbReference type="ChEBI" id="CHEBI:15378"/>
        <dbReference type="ChEBI" id="CHEBI:15775"/>
        <dbReference type="ChEBI" id="CHEBI:16468"/>
        <dbReference type="ChEBI" id="CHEBI:57783"/>
        <dbReference type="ChEBI" id="CHEBI:58349"/>
        <dbReference type="EC" id="1.3.1.32"/>
    </reaction>
</comment>
<comment type="activity regulation">
    <text>Inhibited by p-chloromercuribenzoate and by 3-oxoadipate, and, in a temperature-dependent manner, by manganese.</text>
</comment>
<comment type="biophysicochemical properties">
    <phDependence>
        <text>Optimum pH is 7.5.</text>
    </phDependence>
</comment>
<comment type="pathway">
    <text>Aromatic compound metabolism; 3-chlorocatechol degradation.</text>
</comment>
<comment type="subunit">
    <text evidence="1">Homodimer.</text>
</comment>
<comment type="similarity">
    <text evidence="1">Belongs to the iron-containing alcohol dehydrogenase family.</text>
</comment>
<dbReference type="EC" id="1.3.1.32"/>
<dbReference type="EMBL" id="U16782">
    <property type="protein sequence ID" value="AAC44727.1"/>
    <property type="molecule type" value="Genomic_DNA"/>
</dbReference>
<dbReference type="EMBL" id="AY365053">
    <property type="protein sequence ID" value="AAR31044.1"/>
    <property type="molecule type" value="Genomic_DNA"/>
</dbReference>
<dbReference type="EMBL" id="CP000093">
    <property type="protein sequence ID" value="AAZ65769.1"/>
    <property type="molecule type" value="Genomic_DNA"/>
</dbReference>
<dbReference type="RefSeq" id="WP_011178391.1">
    <property type="nucleotide sequence ID" value="NZ_AY365053.1"/>
</dbReference>
<dbReference type="SMR" id="P94135"/>
<dbReference type="KEGG" id="reu:Reut_D6471"/>
<dbReference type="HOGENOM" id="CLU_007207_0_1_4"/>
<dbReference type="OrthoDB" id="9815791at2"/>
<dbReference type="UniPathway" id="UPA00083"/>
<dbReference type="GO" id="GO:0004022">
    <property type="term" value="F:alcohol dehydrogenase (NAD+) activity"/>
    <property type="evidence" value="ECO:0007669"/>
    <property type="project" value="TreeGrafter"/>
</dbReference>
<dbReference type="GO" id="GO:0018506">
    <property type="term" value="F:maleylacetate reductase activity"/>
    <property type="evidence" value="ECO:0007669"/>
    <property type="project" value="UniProtKB-EC"/>
</dbReference>
<dbReference type="GO" id="GO:0046872">
    <property type="term" value="F:metal ion binding"/>
    <property type="evidence" value="ECO:0007669"/>
    <property type="project" value="InterPro"/>
</dbReference>
<dbReference type="GO" id="GO:1901168">
    <property type="term" value="P:3-chlorocatechol catabolic process"/>
    <property type="evidence" value="ECO:0000314"/>
    <property type="project" value="CACAO"/>
</dbReference>
<dbReference type="CDD" id="cd08177">
    <property type="entry name" value="MAR"/>
    <property type="match status" value="1"/>
</dbReference>
<dbReference type="FunFam" id="3.40.50.1970:FF:000015">
    <property type="entry name" value="Maleylacetate reductase 1"/>
    <property type="match status" value="1"/>
</dbReference>
<dbReference type="Gene3D" id="3.40.50.1970">
    <property type="match status" value="1"/>
</dbReference>
<dbReference type="Gene3D" id="1.20.1090.10">
    <property type="entry name" value="Dehydroquinate synthase-like - alpha domain"/>
    <property type="match status" value="1"/>
</dbReference>
<dbReference type="InterPro" id="IPR001670">
    <property type="entry name" value="ADH_Fe/GldA"/>
</dbReference>
<dbReference type="InterPro" id="IPR056798">
    <property type="entry name" value="ADH_Fe_C"/>
</dbReference>
<dbReference type="InterPro" id="IPR039697">
    <property type="entry name" value="Alcohol_dehydrogenase_Fe"/>
</dbReference>
<dbReference type="InterPro" id="IPR034786">
    <property type="entry name" value="MAR"/>
</dbReference>
<dbReference type="PANTHER" id="PTHR11496">
    <property type="entry name" value="ALCOHOL DEHYDROGENASE"/>
    <property type="match status" value="1"/>
</dbReference>
<dbReference type="PANTHER" id="PTHR11496:SF102">
    <property type="entry name" value="ALCOHOL DEHYDROGENASE 4"/>
    <property type="match status" value="1"/>
</dbReference>
<dbReference type="Pfam" id="PF25137">
    <property type="entry name" value="ADH_Fe_C"/>
    <property type="match status" value="1"/>
</dbReference>
<dbReference type="Pfam" id="PF00465">
    <property type="entry name" value="Fe-ADH"/>
    <property type="match status" value="1"/>
</dbReference>
<dbReference type="SUPFAM" id="SSF56796">
    <property type="entry name" value="Dehydroquinate synthase-like"/>
    <property type="match status" value="1"/>
</dbReference>
<protein>
    <recommendedName>
        <fullName>Maleylacetate reductase 2</fullName>
        <ecNumber>1.3.1.32</ecNumber>
    </recommendedName>
    <alternativeName>
        <fullName>Chloromaleylacetate reductase</fullName>
    </alternativeName>
    <alternativeName>
        <fullName>Maleylacetate reductase II</fullName>
    </alternativeName>
</protein>
<organism>
    <name type="scientific">Cupriavidus pinatubonensis (strain JMP 134 / LMG 1197)</name>
    <name type="common">Cupriavidus necator (strain JMP 134)</name>
    <dbReference type="NCBI Taxonomy" id="264198"/>
    <lineage>
        <taxon>Bacteria</taxon>
        <taxon>Pseudomonadati</taxon>
        <taxon>Pseudomonadota</taxon>
        <taxon>Betaproteobacteria</taxon>
        <taxon>Burkholderiales</taxon>
        <taxon>Burkholderiaceae</taxon>
        <taxon>Cupriavidus</taxon>
    </lineage>
</organism>